<dbReference type="EC" id="1.2.4.1"/>
<dbReference type="EMBL" id="AB083322">
    <property type="protein sequence ID" value="BAC20601.1"/>
    <property type="molecule type" value="mRNA"/>
</dbReference>
<dbReference type="RefSeq" id="NP_001306478.1">
    <property type="nucleotide sequence ID" value="NM_001319549.1"/>
</dbReference>
<dbReference type="SMR" id="Q8HXW9"/>
<dbReference type="STRING" id="9541.ENSMFAP00000023536"/>
<dbReference type="eggNOG" id="KOG0225">
    <property type="taxonomic scope" value="Eukaryota"/>
</dbReference>
<dbReference type="Proteomes" id="UP000233100">
    <property type="component" value="Unplaced"/>
</dbReference>
<dbReference type="GO" id="GO:0005759">
    <property type="term" value="C:mitochondrial matrix"/>
    <property type="evidence" value="ECO:0007669"/>
    <property type="project" value="UniProtKB-SubCell"/>
</dbReference>
<dbReference type="GO" id="GO:0045254">
    <property type="term" value="C:pyruvate dehydrogenase complex"/>
    <property type="evidence" value="ECO:0000250"/>
    <property type="project" value="UniProtKB"/>
</dbReference>
<dbReference type="GO" id="GO:0046872">
    <property type="term" value="F:metal ion binding"/>
    <property type="evidence" value="ECO:0007669"/>
    <property type="project" value="UniProtKB-KW"/>
</dbReference>
<dbReference type="GO" id="GO:0004739">
    <property type="term" value="F:pyruvate dehydrogenase (acetyl-transferring) activity"/>
    <property type="evidence" value="ECO:0007669"/>
    <property type="project" value="UniProtKB-EC"/>
</dbReference>
<dbReference type="GO" id="GO:0006006">
    <property type="term" value="P:glucose metabolic process"/>
    <property type="evidence" value="ECO:0007669"/>
    <property type="project" value="UniProtKB-KW"/>
</dbReference>
<dbReference type="GO" id="GO:0006086">
    <property type="term" value="P:pyruvate decarboxylation to acetyl-CoA"/>
    <property type="evidence" value="ECO:0000250"/>
    <property type="project" value="UniProtKB"/>
</dbReference>
<dbReference type="GO" id="GO:0006099">
    <property type="term" value="P:tricarboxylic acid cycle"/>
    <property type="evidence" value="ECO:0007669"/>
    <property type="project" value="UniProtKB-KW"/>
</dbReference>
<dbReference type="CDD" id="cd02000">
    <property type="entry name" value="TPP_E1_PDC_ADC_BCADC"/>
    <property type="match status" value="1"/>
</dbReference>
<dbReference type="FunFam" id="3.40.50.970:FF:000020">
    <property type="entry name" value="Pyruvate dehydrogenase E1 component subunit alpha, mitochondrial"/>
    <property type="match status" value="1"/>
</dbReference>
<dbReference type="Gene3D" id="3.40.50.970">
    <property type="match status" value="1"/>
</dbReference>
<dbReference type="InterPro" id="IPR001017">
    <property type="entry name" value="DH_E1"/>
</dbReference>
<dbReference type="InterPro" id="IPR050642">
    <property type="entry name" value="PDH_E1_Alpha_Subunit"/>
</dbReference>
<dbReference type="InterPro" id="IPR017597">
    <property type="entry name" value="Pyrv_DH_E1_asu_subgrp-y"/>
</dbReference>
<dbReference type="InterPro" id="IPR029061">
    <property type="entry name" value="THDP-binding"/>
</dbReference>
<dbReference type="NCBIfam" id="TIGR03182">
    <property type="entry name" value="PDH_E1_alph_y"/>
    <property type="match status" value="1"/>
</dbReference>
<dbReference type="PANTHER" id="PTHR11516:SF52">
    <property type="entry name" value="PYRUVATE DEHYDROGENASE E1 COMPONENT SUBUNIT ALPHA, SOMATIC FORM, MITOCHONDRIAL"/>
    <property type="match status" value="1"/>
</dbReference>
<dbReference type="PANTHER" id="PTHR11516">
    <property type="entry name" value="PYRUVATE DEHYDROGENASE E1 COMPONENT, ALPHA SUBUNIT BACTERIAL AND ORGANELLAR"/>
    <property type="match status" value="1"/>
</dbReference>
<dbReference type="Pfam" id="PF00676">
    <property type="entry name" value="E1_dh"/>
    <property type="match status" value="1"/>
</dbReference>
<dbReference type="SUPFAM" id="SSF52518">
    <property type="entry name" value="Thiamin diphosphate-binding fold (THDP-binding)"/>
    <property type="match status" value="1"/>
</dbReference>
<evidence type="ECO:0000250" key="1"/>
<evidence type="ECO:0000250" key="2">
    <source>
        <dbReference type="UniProtKB" id="P08559"/>
    </source>
</evidence>
<evidence type="ECO:0000250" key="3">
    <source>
        <dbReference type="UniProtKB" id="P35486"/>
    </source>
</evidence>
<organism>
    <name type="scientific">Macaca fascicularis</name>
    <name type="common">Crab-eating macaque</name>
    <name type="synonym">Cynomolgus monkey</name>
    <dbReference type="NCBI Taxonomy" id="9541"/>
    <lineage>
        <taxon>Eukaryota</taxon>
        <taxon>Metazoa</taxon>
        <taxon>Chordata</taxon>
        <taxon>Craniata</taxon>
        <taxon>Vertebrata</taxon>
        <taxon>Euteleostomi</taxon>
        <taxon>Mammalia</taxon>
        <taxon>Eutheria</taxon>
        <taxon>Euarchontoglires</taxon>
        <taxon>Primates</taxon>
        <taxon>Haplorrhini</taxon>
        <taxon>Catarrhini</taxon>
        <taxon>Cercopithecidae</taxon>
        <taxon>Cercopithecinae</taxon>
        <taxon>Macaca</taxon>
    </lineage>
</organism>
<proteinExistence type="evidence at transcript level"/>
<feature type="transit peptide" description="Mitochondrion" evidence="1">
    <location>
        <begin position="1"/>
        <end position="29"/>
    </location>
</feature>
<feature type="chain" id="PRO_0000020441" description="Pyruvate dehydrogenase E1 component subunit alpha, somatic form, mitochondrial">
    <location>
        <begin position="30"/>
        <end position="390"/>
    </location>
</feature>
<feature type="binding site" evidence="2">
    <location>
        <position position="92"/>
    </location>
    <ligand>
        <name>pyruvate</name>
        <dbReference type="ChEBI" id="CHEBI:15361"/>
    </ligand>
</feature>
<feature type="binding site" evidence="2">
    <location>
        <position position="118"/>
    </location>
    <ligand>
        <name>pyruvate</name>
        <dbReference type="ChEBI" id="CHEBI:15361"/>
    </ligand>
</feature>
<feature type="binding site" evidence="2">
    <location>
        <position position="118"/>
    </location>
    <ligand>
        <name>thiamine diphosphate</name>
        <dbReference type="ChEBI" id="CHEBI:58937"/>
        <note>ligand shared with beta subunit</note>
    </ligand>
</feature>
<feature type="binding site" evidence="2">
    <location>
        <position position="119"/>
    </location>
    <ligand>
        <name>pyruvate</name>
        <dbReference type="ChEBI" id="CHEBI:15361"/>
    </ligand>
</feature>
<feature type="binding site" evidence="2">
    <location>
        <position position="119"/>
    </location>
    <ligand>
        <name>thiamine diphosphate</name>
        <dbReference type="ChEBI" id="CHEBI:58937"/>
        <note>ligand shared with beta subunit</note>
    </ligand>
</feature>
<feature type="binding site" evidence="2">
    <location>
        <position position="157"/>
    </location>
    <ligand>
        <name>pyruvate</name>
        <dbReference type="ChEBI" id="CHEBI:15361"/>
    </ligand>
</feature>
<feature type="binding site" evidence="2">
    <location>
        <position position="165"/>
    </location>
    <ligand>
        <name>pyruvate</name>
        <dbReference type="ChEBI" id="CHEBI:15361"/>
    </ligand>
</feature>
<feature type="binding site" evidence="2">
    <location>
        <position position="165"/>
    </location>
    <ligand>
        <name>thiamine diphosphate</name>
        <dbReference type="ChEBI" id="CHEBI:58937"/>
        <note>ligand shared with beta subunit</note>
    </ligand>
</feature>
<feature type="binding site" evidence="2">
    <location>
        <position position="167"/>
    </location>
    <ligand>
        <name>pyruvate</name>
        <dbReference type="ChEBI" id="CHEBI:15361"/>
    </ligand>
</feature>
<feature type="binding site" evidence="2">
    <location>
        <position position="167"/>
    </location>
    <ligand>
        <name>thiamine diphosphate</name>
        <dbReference type="ChEBI" id="CHEBI:58937"/>
        <note>ligand shared with beta subunit</note>
    </ligand>
</feature>
<feature type="binding site" evidence="2">
    <location>
        <position position="196"/>
    </location>
    <ligand>
        <name>Mg(2+)</name>
        <dbReference type="ChEBI" id="CHEBI:18420"/>
    </ligand>
</feature>
<feature type="binding site" evidence="2">
    <location>
        <position position="196"/>
    </location>
    <ligand>
        <name>pyruvate</name>
        <dbReference type="ChEBI" id="CHEBI:15361"/>
    </ligand>
</feature>
<feature type="binding site" evidence="2">
    <location>
        <position position="196"/>
    </location>
    <ligand>
        <name>thiamine diphosphate</name>
        <dbReference type="ChEBI" id="CHEBI:58937"/>
        <note>ligand shared with beta subunit</note>
    </ligand>
</feature>
<feature type="binding site" evidence="2">
    <location>
        <position position="197"/>
    </location>
    <ligand>
        <name>pyruvate</name>
        <dbReference type="ChEBI" id="CHEBI:15361"/>
    </ligand>
</feature>
<feature type="binding site" evidence="2">
    <location>
        <position position="197"/>
    </location>
    <ligand>
        <name>thiamine diphosphate</name>
        <dbReference type="ChEBI" id="CHEBI:58937"/>
        <note>ligand shared with beta subunit</note>
    </ligand>
</feature>
<feature type="binding site" evidence="2">
    <location>
        <position position="198"/>
    </location>
    <ligand>
        <name>pyruvate</name>
        <dbReference type="ChEBI" id="CHEBI:15361"/>
    </ligand>
</feature>
<feature type="binding site" evidence="2">
    <location>
        <position position="198"/>
    </location>
    <ligand>
        <name>thiamine diphosphate</name>
        <dbReference type="ChEBI" id="CHEBI:58937"/>
        <note>ligand shared with beta subunit</note>
    </ligand>
</feature>
<feature type="binding site" evidence="2">
    <location>
        <position position="225"/>
    </location>
    <ligand>
        <name>Mg(2+)</name>
        <dbReference type="ChEBI" id="CHEBI:18420"/>
    </ligand>
</feature>
<feature type="binding site" evidence="2">
    <location>
        <position position="225"/>
    </location>
    <ligand>
        <name>pyruvate</name>
        <dbReference type="ChEBI" id="CHEBI:15361"/>
    </ligand>
</feature>
<feature type="binding site" evidence="2">
    <location>
        <position position="225"/>
    </location>
    <ligand>
        <name>thiamine diphosphate</name>
        <dbReference type="ChEBI" id="CHEBI:58937"/>
        <note>ligand shared with beta subunit</note>
    </ligand>
</feature>
<feature type="binding site" evidence="2">
    <location>
        <position position="227"/>
    </location>
    <ligand>
        <name>Mg(2+)</name>
        <dbReference type="ChEBI" id="CHEBI:18420"/>
    </ligand>
</feature>
<feature type="binding site" evidence="2">
    <location>
        <position position="227"/>
    </location>
    <ligand>
        <name>pyruvate</name>
        <dbReference type="ChEBI" id="CHEBI:15361"/>
    </ligand>
</feature>
<feature type="binding site" evidence="2">
    <location>
        <position position="292"/>
    </location>
    <ligand>
        <name>thiamine diphosphate</name>
        <dbReference type="ChEBI" id="CHEBI:58937"/>
        <note>ligand shared with beta subunit</note>
    </ligand>
</feature>
<feature type="modified residue" description="N6-acetyllysine; alternate" evidence="3">
    <location>
        <position position="63"/>
    </location>
</feature>
<feature type="modified residue" description="N6-succinyllysine; alternate" evidence="3">
    <location>
        <position position="63"/>
    </location>
</feature>
<feature type="modified residue" description="Phosphoserine; by PDK1" evidence="2">
    <location>
        <position position="232"/>
    </location>
</feature>
<feature type="modified residue" description="N6-acetyllysine; alternate" evidence="3">
    <location>
        <position position="244"/>
    </location>
</feature>
<feature type="modified residue" description="N6-succinyllysine; alternate" evidence="3">
    <location>
        <position position="244"/>
    </location>
</feature>
<feature type="modified residue" description="N6-succinyllysine" evidence="3">
    <location>
        <position position="277"/>
    </location>
</feature>
<feature type="modified residue" description="Phosphoserine; by PDK1, PDK2, PDK3 and PDK4" evidence="2">
    <location>
        <position position="293"/>
    </location>
</feature>
<feature type="modified residue" description="Phosphoserine" evidence="3">
    <location>
        <position position="295"/>
    </location>
</feature>
<feature type="modified residue" description="Phosphoserine; by PDK1, PDK2, PDK3 and PDK4" evidence="2">
    <location>
        <position position="300"/>
    </location>
</feature>
<feature type="modified residue" description="Phosphotyrosine" evidence="3">
    <location>
        <position position="301"/>
    </location>
</feature>
<feature type="modified residue" description="N6-acetyllysine; alternate" evidence="3">
    <location>
        <position position="313"/>
    </location>
</feature>
<feature type="modified residue" description="N6-succinyllysine; alternate" evidence="3">
    <location>
        <position position="313"/>
    </location>
</feature>
<feature type="modified residue" description="N6-acetyllysine" evidence="2">
    <location>
        <position position="321"/>
    </location>
</feature>
<feature type="modified residue" description="N6-acetyllysine" evidence="3">
    <location>
        <position position="336"/>
    </location>
</feature>
<feature type="modified residue" description="N6-succinyllysine" evidence="3">
    <location>
        <position position="385"/>
    </location>
</feature>
<sequence>MRKMLAAVSRVLSGASQKPASRVLVASRNFANDATFEIKKCDLHRLEEGPPVTTVLTREDGLKYYRMMQTVRRMELKADQLYKQKIIRGFCHLCDGQEACCVGLEAGINPTDHLITAYRAHGFTFTRGLSVREILAELTGRKGGCAKGKGGSTHMYAKNFYRGNGIVGAQVPLGAGIALACKYNGKDEVCLTLYGDGAADQGQIFEAYNMAALWKLPCIFICENNRYGMGTSVERAAASTDYYKRGDFIPGLRVDGMDILCVREATRFAAAYCRSGKGPILMELQTYRYHGHSMSDPGVSYRTREEIQEVRSKSDPIMLLKDRMVNSNLASVEELKEIDVEVRKEIEDAAQFATADPEPPLEELGYHIYSSDPPFEVRGANQWIKFKSVS</sequence>
<gene>
    <name type="primary">PDHA1</name>
    <name type="ORF">QccE-20080</name>
</gene>
<accession>Q8HXW9</accession>
<keyword id="KW-0007">Acetylation</keyword>
<keyword id="KW-0119">Carbohydrate metabolism</keyword>
<keyword id="KW-0313">Glucose metabolism</keyword>
<keyword id="KW-0460">Magnesium</keyword>
<keyword id="KW-0479">Metal-binding</keyword>
<keyword id="KW-0496">Mitochondrion</keyword>
<keyword id="KW-0560">Oxidoreductase</keyword>
<keyword id="KW-0597">Phosphoprotein</keyword>
<keyword id="KW-0670">Pyruvate</keyword>
<keyword id="KW-1185">Reference proteome</keyword>
<keyword id="KW-0786">Thiamine pyrophosphate</keyword>
<keyword id="KW-0809">Transit peptide</keyword>
<keyword id="KW-0816">Tricarboxylic acid cycle</keyword>
<name>ODPA_MACFA</name>
<reference key="1">
    <citation type="submission" date="2002-04" db="EMBL/GenBank/DDBJ databases">
        <title>Isolation and characterization of cDNA for macaque neurological disease genes.</title>
        <authorList>
            <person name="Kusuda J."/>
            <person name="Osada N."/>
            <person name="Hida M."/>
            <person name="Sugano S."/>
            <person name="Hashimoto K."/>
        </authorList>
    </citation>
    <scope>NUCLEOTIDE SEQUENCE [LARGE SCALE MRNA]</scope>
    <source>
        <tissue>Brain cortex</tissue>
    </source>
</reference>
<protein>
    <recommendedName>
        <fullName>Pyruvate dehydrogenase E1 component subunit alpha, somatic form, mitochondrial</fullName>
        <ecNumber>1.2.4.1</ecNumber>
    </recommendedName>
    <alternativeName>
        <fullName>PDHE1-A type I</fullName>
    </alternativeName>
</protein>
<comment type="function">
    <text evidence="1">The pyruvate dehydrogenase complex catalyzes the overall conversion of pyruvate to acetyl-CoA and CO(2), and thereby links the glycolytic pathway to the tricarboxylic cycle.</text>
</comment>
<comment type="catalytic activity">
    <reaction>
        <text>N(6)-[(R)-lipoyl]-L-lysyl-[protein] + pyruvate + H(+) = N(6)-[(R)-S(8)-acetyldihydrolipoyl]-L-lysyl-[protein] + CO2</text>
        <dbReference type="Rhea" id="RHEA:19189"/>
        <dbReference type="Rhea" id="RHEA-COMP:10474"/>
        <dbReference type="Rhea" id="RHEA-COMP:10478"/>
        <dbReference type="ChEBI" id="CHEBI:15361"/>
        <dbReference type="ChEBI" id="CHEBI:15378"/>
        <dbReference type="ChEBI" id="CHEBI:16526"/>
        <dbReference type="ChEBI" id="CHEBI:83099"/>
        <dbReference type="ChEBI" id="CHEBI:83111"/>
        <dbReference type="EC" id="1.2.4.1"/>
    </reaction>
</comment>
<comment type="cofactor">
    <cofactor evidence="2">
        <name>thiamine diphosphate</name>
        <dbReference type="ChEBI" id="CHEBI:58937"/>
    </cofactor>
    <cofactor evidence="2">
        <name>Mg(2+)</name>
        <dbReference type="ChEBI" id="CHEBI:18420"/>
    </cofactor>
</comment>
<comment type="activity regulation">
    <text evidence="1">Pyruvate dehydrogenase activity is inhibited by phosphorylation of PDHA1; it is reactivated by dephosphorylation.</text>
</comment>
<comment type="subunit">
    <text evidence="1">Heterotetramer of two PDHA1 and two PDHB subunits. The heterotetramer interacts with DLAT, and is part of the multimeric pyruvate dehydrogenase complex that contains multiple copies of pyruvate dehydrogenase (E1), dihydrolipoamide acetyltransferase (DLAT, E2) and lipoamide dehydrogenase (DLD, E3). These subunits are bound to an inner core composed of about 48 DLAT and 12 PDHX molecules (By similarity).</text>
</comment>
<comment type="subcellular location">
    <subcellularLocation>
        <location evidence="1">Mitochondrion matrix</location>
    </subcellularLocation>
</comment>
<comment type="PTM">
    <text evidence="1">Phosphorylation at Ser-232, Ser-293 and Ser-300 by PDK family kinases inactivates the enzyme; for this phosphorylation at a single site is sufficient. Phosphorylation at Ser-293 interferes with access to active site, and thereby inactivates the enzyme. Dephosphorylation at all three sites, i.e. at Ser-232, Ser-293 and Ser-300, is required for reactivation (By similarity).</text>
</comment>
<comment type="PTM">
    <text evidence="1">Acetylation alters the phosphorylation pattern. Deacetylated by SIRT3 (By similarity).</text>
</comment>